<keyword id="KW-0472">Membrane</keyword>
<keyword id="KW-1185">Reference proteome</keyword>
<keyword id="KW-0812">Transmembrane</keyword>
<keyword id="KW-1133">Transmembrane helix</keyword>
<comment type="subcellular location">
    <subcellularLocation>
        <location evidence="3">Membrane</location>
        <topology evidence="3">Multi-pass membrane protein</topology>
    </subcellularLocation>
</comment>
<comment type="similarity">
    <text evidence="3">Belongs to the TMEM248 family.</text>
</comment>
<evidence type="ECO:0000255" key="1"/>
<evidence type="ECO:0000256" key="2">
    <source>
        <dbReference type="SAM" id="MobiDB-lite"/>
    </source>
</evidence>
<evidence type="ECO:0000305" key="3"/>
<name>TM248_RAT</name>
<sequence>MFSINPLENLKLYISSRPPLVVFMISVSAMAIAFLTLGYFFKIKEIKSPEMAEDWNTFLLRFNDLDLCVSENETLKHLSNDTTTPESTMTIGQTRSSTQPPQSLEESGPINISVAITLTLDPLKPFGGYSRNVTHLYSTILGHQIGLSGREAHEEINITFTLPAAWNADDCALHGHCEQVVFTACMTLTAAPGVFPVTVQPPHCVPDTYSNATLWYKIFTTARDANTKYAQDYNPFWCYKGAIGKVYHALNPKLTVIVPDDDRSLINLHLMHTSYFLFVMVITMFCYAVIKGRPSKLRQSNPEFCPEKVALADA</sequence>
<feature type="chain" id="PRO_0000295128" description="Transmembrane protein 248">
    <location>
        <begin position="1"/>
        <end position="314"/>
    </location>
</feature>
<feature type="transmembrane region" description="Helical" evidence="1">
    <location>
        <begin position="21"/>
        <end position="41"/>
    </location>
</feature>
<feature type="transmembrane region" description="Helical" evidence="1">
    <location>
        <begin position="179"/>
        <end position="199"/>
    </location>
</feature>
<feature type="transmembrane region" description="Helical" evidence="1">
    <location>
        <begin position="270"/>
        <end position="290"/>
    </location>
</feature>
<feature type="region of interest" description="Disordered" evidence="2">
    <location>
        <begin position="78"/>
        <end position="106"/>
    </location>
</feature>
<feature type="compositionally biased region" description="Polar residues" evidence="2">
    <location>
        <begin position="80"/>
        <end position="105"/>
    </location>
</feature>
<dbReference type="EMBL" id="BC079161">
    <property type="protein sequence ID" value="AAH79161.1"/>
    <property type="molecule type" value="mRNA"/>
</dbReference>
<dbReference type="EMBL" id="BC090318">
    <property type="protein sequence ID" value="AAH90318.1"/>
    <property type="molecule type" value="mRNA"/>
</dbReference>
<dbReference type="RefSeq" id="NP_001004204.1">
    <property type="nucleotide sequence ID" value="NM_001004204.2"/>
</dbReference>
<dbReference type="RefSeq" id="XP_006249292.1">
    <property type="nucleotide sequence ID" value="XM_006249230.5"/>
</dbReference>
<dbReference type="RefSeq" id="XP_006249293.1">
    <property type="nucleotide sequence ID" value="XM_006249231.3"/>
</dbReference>
<dbReference type="RefSeq" id="XP_063127230.1">
    <property type="nucleotide sequence ID" value="XM_063271160.1"/>
</dbReference>
<dbReference type="RefSeq" id="XP_063127231.1">
    <property type="nucleotide sequence ID" value="XM_063271161.1"/>
</dbReference>
<dbReference type="RefSeq" id="XP_063127232.1">
    <property type="nucleotide sequence ID" value="XM_063271162.1"/>
</dbReference>
<dbReference type="RefSeq" id="XP_063127233.1">
    <property type="nucleotide sequence ID" value="XM_063271163.1"/>
</dbReference>
<dbReference type="FunCoup" id="Q6AY76">
    <property type="interactions" value="2281"/>
</dbReference>
<dbReference type="STRING" id="10116.ENSRNOP00000055516"/>
<dbReference type="iPTMnet" id="Q6AY76"/>
<dbReference type="PhosphoSitePlus" id="Q6AY76"/>
<dbReference type="PaxDb" id="10116-ENSRNOP00000055516"/>
<dbReference type="Ensembl" id="ENSRNOT00000058725.3">
    <property type="protein sequence ID" value="ENSRNOP00000055516.1"/>
    <property type="gene ID" value="ENSRNOG00000000893.7"/>
</dbReference>
<dbReference type="GeneID" id="288616"/>
<dbReference type="KEGG" id="rno:288616"/>
<dbReference type="AGR" id="RGD:1303319"/>
<dbReference type="CTD" id="55069"/>
<dbReference type="RGD" id="1303319">
    <property type="gene designation" value="Tmem248"/>
</dbReference>
<dbReference type="eggNOG" id="ENOG502R6D8">
    <property type="taxonomic scope" value="Eukaryota"/>
</dbReference>
<dbReference type="GeneTree" id="ENSGT00940000153883"/>
<dbReference type="HOGENOM" id="CLU_080742_0_0_1"/>
<dbReference type="InParanoid" id="Q6AY76"/>
<dbReference type="OrthoDB" id="9701at9989"/>
<dbReference type="PhylomeDB" id="Q6AY76"/>
<dbReference type="TreeFam" id="TF331542"/>
<dbReference type="PRO" id="PR:Q6AY76"/>
<dbReference type="Proteomes" id="UP000002494">
    <property type="component" value="Chromosome 12"/>
</dbReference>
<dbReference type="Bgee" id="ENSRNOG00000000893">
    <property type="expression patterns" value="Expressed in pancreas and 20 other cell types or tissues"/>
</dbReference>
<dbReference type="GO" id="GO:0016020">
    <property type="term" value="C:membrane"/>
    <property type="evidence" value="ECO:0007669"/>
    <property type="project" value="UniProtKB-SubCell"/>
</dbReference>
<dbReference type="InterPro" id="IPR039493">
    <property type="entry name" value="TMEM248/TMEM219"/>
</dbReference>
<dbReference type="InterPro" id="IPR039587">
    <property type="entry name" value="TMEM248/TMEM219_dom"/>
</dbReference>
<dbReference type="PANTHER" id="PTHR16002:SF5">
    <property type="entry name" value="TRANSMEMBRANE PROTEIN 248"/>
    <property type="match status" value="1"/>
</dbReference>
<dbReference type="PANTHER" id="PTHR16002">
    <property type="entry name" value="TRANSMEMBRANE PROTEIN 248-LIKE"/>
    <property type="match status" value="1"/>
</dbReference>
<dbReference type="Pfam" id="PF14940">
    <property type="entry name" value="TMEM219"/>
    <property type="match status" value="1"/>
</dbReference>
<proteinExistence type="evidence at transcript level"/>
<gene>
    <name type="primary">Tmem248</name>
</gene>
<protein>
    <recommendedName>
        <fullName>Transmembrane protein 248</fullName>
    </recommendedName>
</protein>
<reference key="1">
    <citation type="journal article" date="2004" name="Genome Res.">
        <title>The status, quality, and expansion of the NIH full-length cDNA project: the Mammalian Gene Collection (MGC).</title>
        <authorList>
            <consortium name="The MGC Project Team"/>
        </authorList>
    </citation>
    <scope>NUCLEOTIDE SEQUENCE [LARGE SCALE MRNA]</scope>
    <source>
        <tissue>Kidney</tissue>
        <tissue>Testis</tissue>
    </source>
</reference>
<accession>Q6AY76</accession>
<organism>
    <name type="scientific">Rattus norvegicus</name>
    <name type="common">Rat</name>
    <dbReference type="NCBI Taxonomy" id="10116"/>
    <lineage>
        <taxon>Eukaryota</taxon>
        <taxon>Metazoa</taxon>
        <taxon>Chordata</taxon>
        <taxon>Craniata</taxon>
        <taxon>Vertebrata</taxon>
        <taxon>Euteleostomi</taxon>
        <taxon>Mammalia</taxon>
        <taxon>Eutheria</taxon>
        <taxon>Euarchontoglires</taxon>
        <taxon>Glires</taxon>
        <taxon>Rodentia</taxon>
        <taxon>Myomorpha</taxon>
        <taxon>Muroidea</taxon>
        <taxon>Muridae</taxon>
        <taxon>Murinae</taxon>
        <taxon>Rattus</taxon>
    </lineage>
</organism>